<name>RS10_RHOPA</name>
<accession>Q6N4T6</accession>
<proteinExistence type="evidence at protein level"/>
<sequence length="102" mass="11669">MNGQNIRIRLKAFDHRILDTSTREIVNTAKRTGAQVRGPIPLPTRIEKFTVNRSPHVDKKSREQFEMRTHKRLLDIVDPTPQTVDALMKLDLAAGVDVEIKL</sequence>
<reference key="1">
    <citation type="journal article" date="2004" name="Nat. Biotechnol.">
        <title>Complete genome sequence of the metabolically versatile photosynthetic bacterium Rhodopseudomonas palustris.</title>
        <authorList>
            <person name="Larimer F.W."/>
            <person name="Chain P."/>
            <person name="Hauser L."/>
            <person name="Lamerdin J.E."/>
            <person name="Malfatti S."/>
            <person name="Do L."/>
            <person name="Land M.L."/>
            <person name="Pelletier D.A."/>
            <person name="Beatty J.T."/>
            <person name="Lang A.S."/>
            <person name="Tabita F.R."/>
            <person name="Gibson J.L."/>
            <person name="Hanson T.E."/>
            <person name="Bobst C."/>
            <person name="Torres y Torres J.L."/>
            <person name="Peres C."/>
            <person name="Harrison F.H."/>
            <person name="Gibson J."/>
            <person name="Harwood C.S."/>
        </authorList>
    </citation>
    <scope>NUCLEOTIDE SEQUENCE [LARGE SCALE GENOMIC DNA]</scope>
    <source>
        <strain>ATCC BAA-98 / CGA009</strain>
    </source>
</reference>
<reference key="2">
    <citation type="journal article" date="2004" name="J. Proteome Res.">
        <title>Characterization of the 70S ribosome from Rhodopseudomonas palustris using an integrated 'top-down' and 'bottom-up' mass spectrometric approach.</title>
        <authorList>
            <person name="Strader M.B."/>
            <person name="VerBerkmoes N.C."/>
            <person name="Tabb D.L."/>
            <person name="Connelly H.M."/>
            <person name="Barton J.W."/>
            <person name="Bruce B.D."/>
            <person name="Pelletier D.A."/>
            <person name="Davison B.H."/>
            <person name="Hettich R.L."/>
            <person name="Larimer F.W."/>
            <person name="Hurst G.B."/>
        </authorList>
    </citation>
    <scope>MASS SPECTROMETRY</scope>
    <source>
        <strain>ATCC BAA-98 / CGA009</strain>
    </source>
</reference>
<keyword id="KW-0687">Ribonucleoprotein</keyword>
<keyword id="KW-0689">Ribosomal protein</keyword>
<evidence type="ECO:0000255" key="1">
    <source>
        <dbReference type="HAMAP-Rule" id="MF_00508"/>
    </source>
</evidence>
<evidence type="ECO:0000269" key="2">
    <source>
    </source>
</evidence>
<evidence type="ECO:0000305" key="3"/>
<gene>
    <name type="primary">rpsJ</name>
    <name type="ordered locus">RPA3251</name>
</gene>
<feature type="initiator methionine" description="Removed">
    <location>
        <position position="1"/>
    </location>
</feature>
<feature type="chain" id="PRO_0000146585" description="Small ribosomal subunit protein uS10">
    <location>
        <begin position="2"/>
        <end position="102"/>
    </location>
</feature>
<dbReference type="EMBL" id="BX572603">
    <property type="protein sequence ID" value="CAE28692.1"/>
    <property type="molecule type" value="Genomic_DNA"/>
</dbReference>
<dbReference type="RefSeq" id="WP_002712302.1">
    <property type="nucleotide sequence ID" value="NZ_CP116810.1"/>
</dbReference>
<dbReference type="SMR" id="Q6N4T6"/>
<dbReference type="IntAct" id="Q6N4T6">
    <property type="interactions" value="1"/>
</dbReference>
<dbReference type="STRING" id="258594.RPA3251"/>
<dbReference type="GeneID" id="93215325"/>
<dbReference type="eggNOG" id="COG0051">
    <property type="taxonomic scope" value="Bacteria"/>
</dbReference>
<dbReference type="HOGENOM" id="CLU_122625_1_3_5"/>
<dbReference type="PhylomeDB" id="Q6N4T6"/>
<dbReference type="GO" id="GO:1990904">
    <property type="term" value="C:ribonucleoprotein complex"/>
    <property type="evidence" value="ECO:0007669"/>
    <property type="project" value="UniProtKB-KW"/>
</dbReference>
<dbReference type="GO" id="GO:0005840">
    <property type="term" value="C:ribosome"/>
    <property type="evidence" value="ECO:0007669"/>
    <property type="project" value="UniProtKB-KW"/>
</dbReference>
<dbReference type="GO" id="GO:0003735">
    <property type="term" value="F:structural constituent of ribosome"/>
    <property type="evidence" value="ECO:0007669"/>
    <property type="project" value="InterPro"/>
</dbReference>
<dbReference type="GO" id="GO:0000049">
    <property type="term" value="F:tRNA binding"/>
    <property type="evidence" value="ECO:0007669"/>
    <property type="project" value="UniProtKB-UniRule"/>
</dbReference>
<dbReference type="GO" id="GO:0006412">
    <property type="term" value="P:translation"/>
    <property type="evidence" value="ECO:0007669"/>
    <property type="project" value="UniProtKB-UniRule"/>
</dbReference>
<dbReference type="FunFam" id="3.30.70.600:FF:000001">
    <property type="entry name" value="30S ribosomal protein S10"/>
    <property type="match status" value="1"/>
</dbReference>
<dbReference type="Gene3D" id="3.30.70.600">
    <property type="entry name" value="Ribosomal protein S10 domain"/>
    <property type="match status" value="1"/>
</dbReference>
<dbReference type="HAMAP" id="MF_00508">
    <property type="entry name" value="Ribosomal_uS10"/>
    <property type="match status" value="1"/>
</dbReference>
<dbReference type="InterPro" id="IPR001848">
    <property type="entry name" value="Ribosomal_uS10"/>
</dbReference>
<dbReference type="InterPro" id="IPR018268">
    <property type="entry name" value="Ribosomal_uS10_CS"/>
</dbReference>
<dbReference type="InterPro" id="IPR027486">
    <property type="entry name" value="Ribosomal_uS10_dom"/>
</dbReference>
<dbReference type="InterPro" id="IPR036838">
    <property type="entry name" value="Ribosomal_uS10_dom_sf"/>
</dbReference>
<dbReference type="NCBIfam" id="NF001861">
    <property type="entry name" value="PRK00596.1"/>
    <property type="match status" value="1"/>
</dbReference>
<dbReference type="NCBIfam" id="TIGR01049">
    <property type="entry name" value="rpsJ_bact"/>
    <property type="match status" value="1"/>
</dbReference>
<dbReference type="PANTHER" id="PTHR11700">
    <property type="entry name" value="30S RIBOSOMAL PROTEIN S10 FAMILY MEMBER"/>
    <property type="match status" value="1"/>
</dbReference>
<dbReference type="Pfam" id="PF00338">
    <property type="entry name" value="Ribosomal_S10"/>
    <property type="match status" value="1"/>
</dbReference>
<dbReference type="PRINTS" id="PR00971">
    <property type="entry name" value="RIBOSOMALS10"/>
</dbReference>
<dbReference type="SMART" id="SM01403">
    <property type="entry name" value="Ribosomal_S10"/>
    <property type="match status" value="1"/>
</dbReference>
<dbReference type="SUPFAM" id="SSF54999">
    <property type="entry name" value="Ribosomal protein S10"/>
    <property type="match status" value="1"/>
</dbReference>
<dbReference type="PROSITE" id="PS00361">
    <property type="entry name" value="RIBOSOMAL_S10"/>
    <property type="match status" value="1"/>
</dbReference>
<organism>
    <name type="scientific">Rhodopseudomonas palustris (strain ATCC BAA-98 / CGA009)</name>
    <dbReference type="NCBI Taxonomy" id="258594"/>
    <lineage>
        <taxon>Bacteria</taxon>
        <taxon>Pseudomonadati</taxon>
        <taxon>Pseudomonadota</taxon>
        <taxon>Alphaproteobacteria</taxon>
        <taxon>Hyphomicrobiales</taxon>
        <taxon>Nitrobacteraceae</taxon>
        <taxon>Rhodopseudomonas</taxon>
    </lineage>
</organism>
<comment type="function">
    <text evidence="1">Involved in the binding of tRNA to the ribosomes.</text>
</comment>
<comment type="subunit">
    <text evidence="1">Part of the 30S ribosomal subunit.</text>
</comment>
<comment type="mass spectrometry" mass="11667.4" method="Electrospray" evidence="2"/>
<comment type="similarity">
    <text evidence="1 3">Belongs to the universal ribosomal protein uS10 family.</text>
</comment>
<protein>
    <recommendedName>
        <fullName evidence="1">Small ribosomal subunit protein uS10</fullName>
    </recommendedName>
    <alternativeName>
        <fullName evidence="3">30S ribosomal protein S10</fullName>
    </alternativeName>
    <alternativeName>
        <fullName>RRP-S10</fullName>
    </alternativeName>
</protein>